<dbReference type="EMBL" id="DS027688">
    <property type="protein sequence ID" value="EAW23177.1"/>
    <property type="molecule type" value="Genomic_DNA"/>
</dbReference>
<dbReference type="RefSeq" id="XP_001265074.1">
    <property type="nucleotide sequence ID" value="XM_001265073.1"/>
</dbReference>
<dbReference type="SMR" id="A1D434"/>
<dbReference type="STRING" id="331117.A1D434"/>
<dbReference type="EnsemblFungi" id="EAW23177">
    <property type="protein sequence ID" value="EAW23177"/>
    <property type="gene ID" value="NFIA_018780"/>
</dbReference>
<dbReference type="GeneID" id="4591210"/>
<dbReference type="KEGG" id="nfi:NFIA_018780"/>
<dbReference type="VEuPathDB" id="FungiDB:NFIA_018780"/>
<dbReference type="eggNOG" id="KOG3046">
    <property type="taxonomic scope" value="Eukaryota"/>
</dbReference>
<dbReference type="HOGENOM" id="CLU_096169_1_1_1"/>
<dbReference type="OMA" id="QYQRAKM"/>
<dbReference type="OrthoDB" id="337270at2759"/>
<dbReference type="Proteomes" id="UP000006702">
    <property type="component" value="Unassembled WGS sequence"/>
</dbReference>
<dbReference type="GO" id="GO:0016592">
    <property type="term" value="C:mediator complex"/>
    <property type="evidence" value="ECO:0007669"/>
    <property type="project" value="InterPro"/>
</dbReference>
<dbReference type="GO" id="GO:0003712">
    <property type="term" value="F:transcription coregulator activity"/>
    <property type="evidence" value="ECO:0007669"/>
    <property type="project" value="InterPro"/>
</dbReference>
<dbReference type="GO" id="GO:0006357">
    <property type="term" value="P:regulation of transcription by RNA polymerase II"/>
    <property type="evidence" value="ECO:0007669"/>
    <property type="project" value="InterPro"/>
</dbReference>
<dbReference type="InterPro" id="IPR019145">
    <property type="entry name" value="Mediator_Med10"/>
</dbReference>
<dbReference type="Pfam" id="PF09748">
    <property type="entry name" value="Med10"/>
    <property type="match status" value="1"/>
</dbReference>
<gene>
    <name type="primary">nut2</name>
    <name type="synonym">med10</name>
    <name type="ORF">NFIA_018780</name>
</gene>
<keyword id="KW-0010">Activator</keyword>
<keyword id="KW-0539">Nucleus</keyword>
<keyword id="KW-1185">Reference proteome</keyword>
<keyword id="KW-0804">Transcription</keyword>
<keyword id="KW-0805">Transcription regulation</keyword>
<organism>
    <name type="scientific">Neosartorya fischeri (strain ATCC 1020 / DSM 3700 / CBS 544.65 / FGSC A1164 / JCM 1740 / NRRL 181 / WB 181)</name>
    <name type="common">Aspergillus fischerianus</name>
    <dbReference type="NCBI Taxonomy" id="331117"/>
    <lineage>
        <taxon>Eukaryota</taxon>
        <taxon>Fungi</taxon>
        <taxon>Dikarya</taxon>
        <taxon>Ascomycota</taxon>
        <taxon>Pezizomycotina</taxon>
        <taxon>Eurotiomycetes</taxon>
        <taxon>Eurotiomycetidae</taxon>
        <taxon>Eurotiales</taxon>
        <taxon>Aspergillaceae</taxon>
        <taxon>Aspergillus</taxon>
        <taxon>Aspergillus subgen. Fumigati</taxon>
    </lineage>
</organism>
<reference key="1">
    <citation type="journal article" date="2008" name="PLoS Genet.">
        <title>Genomic islands in the pathogenic filamentous fungus Aspergillus fumigatus.</title>
        <authorList>
            <person name="Fedorova N.D."/>
            <person name="Khaldi N."/>
            <person name="Joardar V.S."/>
            <person name="Maiti R."/>
            <person name="Amedeo P."/>
            <person name="Anderson M.J."/>
            <person name="Crabtree J."/>
            <person name="Silva J.C."/>
            <person name="Badger J.H."/>
            <person name="Albarraq A."/>
            <person name="Angiuoli S."/>
            <person name="Bussey H."/>
            <person name="Bowyer P."/>
            <person name="Cotty P.J."/>
            <person name="Dyer P.S."/>
            <person name="Egan A."/>
            <person name="Galens K."/>
            <person name="Fraser-Liggett C.M."/>
            <person name="Haas B.J."/>
            <person name="Inman J.M."/>
            <person name="Kent R."/>
            <person name="Lemieux S."/>
            <person name="Malavazi I."/>
            <person name="Orvis J."/>
            <person name="Roemer T."/>
            <person name="Ronning C.M."/>
            <person name="Sundaram J.P."/>
            <person name="Sutton G."/>
            <person name="Turner G."/>
            <person name="Venter J.C."/>
            <person name="White O.R."/>
            <person name="Whitty B.R."/>
            <person name="Youngman P."/>
            <person name="Wolfe K.H."/>
            <person name="Goldman G.H."/>
            <person name="Wortman J.R."/>
            <person name="Jiang B."/>
            <person name="Denning D.W."/>
            <person name="Nierman W.C."/>
        </authorList>
    </citation>
    <scope>NUCLEOTIDE SEQUENCE [LARGE SCALE GENOMIC DNA]</scope>
    <source>
        <strain>ATCC 1020 / DSM 3700 / CBS 544.65 / FGSC A1164 / JCM 1740 / NRRL 181 / WB 181</strain>
    </source>
</reference>
<sequence length="167" mass="18713">MAPITLSTVDDDLKEVIQHLFEIQSAVHGYLGPETQTELVRKIKNLTLALSTLSTHTKPQPPSQDEEQKEKQDDTPEGSANDPLLRDIQLPPEIIDYVDAARNPDIYTREFVELVQRGNQDLKGKKEAFASFRDVLAREMRSAMPECRGEVERVLAATGGARVDTEQ</sequence>
<feature type="chain" id="PRO_0000303173" description="Mediator of RNA polymerase II transcription subunit 10">
    <location>
        <begin position="1"/>
        <end position="167"/>
    </location>
</feature>
<feature type="region of interest" description="Disordered" evidence="2">
    <location>
        <begin position="53"/>
        <end position="88"/>
    </location>
</feature>
<protein>
    <recommendedName>
        <fullName>Mediator of RNA polymerase II transcription subunit 10</fullName>
    </recommendedName>
    <alternativeName>
        <fullName>Mediator complex subunit 10</fullName>
    </alternativeName>
</protein>
<proteinExistence type="inferred from homology"/>
<evidence type="ECO:0000250" key="1"/>
<evidence type="ECO:0000256" key="2">
    <source>
        <dbReference type="SAM" id="MobiDB-lite"/>
    </source>
</evidence>
<evidence type="ECO:0000305" key="3"/>
<accession>A1D434</accession>
<comment type="function">
    <text evidence="1">Component of the Mediator complex, a coactivator involved in the regulated transcription of nearly all RNA polymerase II-dependent genes. Mediator functions as a bridge to convey information from gene-specific regulatory proteins to the basal RNA polymerase II transcription machinery. Mediator is recruited to promoters by direct interactions with regulatory proteins and serves as a scaffold for the assembly of a functional preinitiation complex with RNA polymerase II and the general transcription factors (By similarity).</text>
</comment>
<comment type="subunit">
    <text evidence="1">Component of the Mediator complex.</text>
</comment>
<comment type="subcellular location">
    <subcellularLocation>
        <location evidence="1">Nucleus</location>
    </subcellularLocation>
</comment>
<comment type="similarity">
    <text evidence="3">Belongs to the Mediator complex subunit 10 family.</text>
</comment>
<name>MED10_NEOFI</name>